<protein>
    <recommendedName>
        <fullName>Uncharacterized protein L583</fullName>
    </recommendedName>
</protein>
<dbReference type="EMBL" id="AY653733">
    <property type="protein sequence ID" value="AAV50846.1"/>
    <property type="molecule type" value="Genomic_DNA"/>
</dbReference>
<dbReference type="SMR" id="Q5UR53"/>
<dbReference type="KEGG" id="vg:9925219"/>
<dbReference type="Proteomes" id="UP000001134">
    <property type="component" value="Genome"/>
</dbReference>
<dbReference type="InterPro" id="IPR027267">
    <property type="entry name" value="AH/BAR_dom_sf"/>
</dbReference>
<dbReference type="SUPFAM" id="SSF103657">
    <property type="entry name" value="BAR/IMD domain-like"/>
    <property type="match status" value="1"/>
</dbReference>
<organism>
    <name type="scientific">Acanthamoeba polyphaga mimivirus</name>
    <name type="common">APMV</name>
    <dbReference type="NCBI Taxonomy" id="212035"/>
    <lineage>
        <taxon>Viruses</taxon>
        <taxon>Varidnaviria</taxon>
        <taxon>Bamfordvirae</taxon>
        <taxon>Nucleocytoviricota</taxon>
        <taxon>Megaviricetes</taxon>
        <taxon>Imitervirales</taxon>
        <taxon>Mimiviridae</taxon>
        <taxon>Megamimivirinae</taxon>
        <taxon>Mimivirus</taxon>
        <taxon>Mimivirus bradfordmassiliense</taxon>
    </lineage>
</organism>
<name>YL583_MIMIV</name>
<organismHost>
    <name type="scientific">Acanthamoeba polyphaga</name>
    <name type="common">Amoeba</name>
    <dbReference type="NCBI Taxonomy" id="5757"/>
</organismHost>
<proteinExistence type="predicted"/>
<sequence length="104" mass="12395">MTSVETILNYLAYFNRGDYVIVLVIKQIIEKYNDKVKELDTLKNQYQNLQQDYENLKQQVSLQRQTMISTTNDIKQIVNDFKENYVNIHPEYISDSQTNCHQVE</sequence>
<accession>Q5UR53</accession>
<keyword id="KW-0175">Coiled coil</keyword>
<keyword id="KW-1185">Reference proteome</keyword>
<gene>
    <name type="ordered locus">MIMI_L583</name>
</gene>
<evidence type="ECO:0000255" key="1"/>
<feature type="chain" id="PRO_0000251123" description="Uncharacterized protein L583">
    <location>
        <begin position="1"/>
        <end position="104"/>
    </location>
</feature>
<feature type="coiled-coil region" evidence="1">
    <location>
        <begin position="24"/>
        <end position="69"/>
    </location>
</feature>
<reference key="1">
    <citation type="journal article" date="2004" name="Science">
        <title>The 1.2-megabase genome sequence of Mimivirus.</title>
        <authorList>
            <person name="Raoult D."/>
            <person name="Audic S."/>
            <person name="Robert C."/>
            <person name="Abergel C."/>
            <person name="Renesto P."/>
            <person name="Ogata H."/>
            <person name="La Scola B."/>
            <person name="Susan M."/>
            <person name="Claverie J.-M."/>
        </authorList>
    </citation>
    <scope>NUCLEOTIDE SEQUENCE [LARGE SCALE GENOMIC DNA]</scope>
    <source>
        <strain>Rowbotham-Bradford</strain>
    </source>
</reference>